<name>RBL_NITST</name>
<keyword id="KW-0113">Calvin cycle</keyword>
<keyword id="KW-0120">Carbon dioxide fixation</keyword>
<keyword id="KW-0456">Lyase</keyword>
<keyword id="KW-0460">Magnesium</keyword>
<keyword id="KW-0479">Metal-binding</keyword>
<keyword id="KW-0503">Monooxygenase</keyword>
<keyword id="KW-0560">Oxidoreductase</keyword>
<dbReference type="EC" id="4.1.1.39" evidence="1"/>
<dbReference type="EMBL" id="AF459718">
    <property type="protein sequence ID" value="AAL66359.1"/>
    <property type="molecule type" value="Genomic_DNA"/>
</dbReference>
<dbReference type="SMR" id="Q8VQ84"/>
<dbReference type="GO" id="GO:0000287">
    <property type="term" value="F:magnesium ion binding"/>
    <property type="evidence" value="ECO:0007669"/>
    <property type="project" value="UniProtKB-UniRule"/>
</dbReference>
<dbReference type="GO" id="GO:0004497">
    <property type="term" value="F:monooxygenase activity"/>
    <property type="evidence" value="ECO:0007669"/>
    <property type="project" value="UniProtKB-KW"/>
</dbReference>
<dbReference type="GO" id="GO:0016984">
    <property type="term" value="F:ribulose-bisphosphate carboxylase activity"/>
    <property type="evidence" value="ECO:0007669"/>
    <property type="project" value="UniProtKB-UniRule"/>
</dbReference>
<dbReference type="GO" id="GO:0019253">
    <property type="term" value="P:reductive pentose-phosphate cycle"/>
    <property type="evidence" value="ECO:0007669"/>
    <property type="project" value="UniProtKB-UniRule"/>
</dbReference>
<dbReference type="Gene3D" id="3.20.20.110">
    <property type="entry name" value="Ribulose bisphosphate carboxylase, large subunit, C-terminal domain"/>
    <property type="match status" value="1"/>
</dbReference>
<dbReference type="Gene3D" id="3.30.70.150">
    <property type="entry name" value="RuBisCO large subunit, N-terminal domain"/>
    <property type="match status" value="1"/>
</dbReference>
<dbReference type="HAMAP" id="MF_01338">
    <property type="entry name" value="RuBisCO_L_type1"/>
    <property type="match status" value="1"/>
</dbReference>
<dbReference type="InterPro" id="IPR033966">
    <property type="entry name" value="RuBisCO"/>
</dbReference>
<dbReference type="InterPro" id="IPR020878">
    <property type="entry name" value="RuBisCo_large_chain_AS"/>
</dbReference>
<dbReference type="InterPro" id="IPR000685">
    <property type="entry name" value="RuBisCO_lsu_C"/>
</dbReference>
<dbReference type="InterPro" id="IPR036376">
    <property type="entry name" value="RuBisCO_lsu_C_sf"/>
</dbReference>
<dbReference type="InterPro" id="IPR017443">
    <property type="entry name" value="RuBisCO_lsu_fd_N"/>
</dbReference>
<dbReference type="InterPro" id="IPR036422">
    <property type="entry name" value="RuBisCO_lsu_N_sf"/>
</dbReference>
<dbReference type="InterPro" id="IPR020888">
    <property type="entry name" value="RuBisCO_lsuI"/>
</dbReference>
<dbReference type="NCBIfam" id="NF003252">
    <property type="entry name" value="PRK04208.1"/>
    <property type="match status" value="1"/>
</dbReference>
<dbReference type="PANTHER" id="PTHR42704">
    <property type="entry name" value="RIBULOSE BISPHOSPHATE CARBOXYLASE"/>
    <property type="match status" value="1"/>
</dbReference>
<dbReference type="PANTHER" id="PTHR42704:SF17">
    <property type="entry name" value="RIBULOSE BISPHOSPHATE CARBOXYLASE LARGE CHAIN"/>
    <property type="match status" value="1"/>
</dbReference>
<dbReference type="Pfam" id="PF00016">
    <property type="entry name" value="RuBisCO_large"/>
    <property type="match status" value="1"/>
</dbReference>
<dbReference type="Pfam" id="PF02788">
    <property type="entry name" value="RuBisCO_large_N"/>
    <property type="match status" value="1"/>
</dbReference>
<dbReference type="SFLD" id="SFLDG01052">
    <property type="entry name" value="RuBisCO"/>
    <property type="match status" value="1"/>
</dbReference>
<dbReference type="SFLD" id="SFLDS00014">
    <property type="entry name" value="RuBisCO"/>
    <property type="match status" value="1"/>
</dbReference>
<dbReference type="SFLD" id="SFLDG00301">
    <property type="entry name" value="RuBisCO-like_proteins"/>
    <property type="match status" value="1"/>
</dbReference>
<dbReference type="SUPFAM" id="SSF51649">
    <property type="entry name" value="RuBisCo, C-terminal domain"/>
    <property type="match status" value="1"/>
</dbReference>
<dbReference type="SUPFAM" id="SSF54966">
    <property type="entry name" value="RuBisCO, large subunit, small (N-terminal) domain"/>
    <property type="match status" value="1"/>
</dbReference>
<dbReference type="PROSITE" id="PS00157">
    <property type="entry name" value="RUBISCO_LARGE"/>
    <property type="match status" value="1"/>
</dbReference>
<protein>
    <recommendedName>
        <fullName evidence="1">Ribulose bisphosphate carboxylase large chain</fullName>
        <shortName evidence="1">RuBisCO large subunit</shortName>
        <ecNumber evidence="1">4.1.1.39</ecNumber>
    </recommendedName>
</protein>
<evidence type="ECO:0000255" key="1">
    <source>
        <dbReference type="HAMAP-Rule" id="MF_01338"/>
    </source>
</evidence>
<proteinExistence type="inferred from homology"/>
<feature type="chain" id="PRO_0000062632" description="Ribulose bisphosphate carboxylase large chain">
    <location>
        <begin position="1"/>
        <end position="473"/>
    </location>
</feature>
<feature type="active site" description="Proton acceptor" evidence="1">
    <location>
        <position position="168"/>
    </location>
</feature>
<feature type="active site" description="Proton acceptor" evidence="1">
    <location>
        <position position="287"/>
    </location>
</feature>
<feature type="binding site" description="in homodimeric partner" evidence="1">
    <location>
        <position position="116"/>
    </location>
    <ligand>
        <name>substrate</name>
    </ligand>
</feature>
<feature type="binding site" evidence="1">
    <location>
        <position position="166"/>
    </location>
    <ligand>
        <name>substrate</name>
    </ligand>
</feature>
<feature type="binding site" evidence="1">
    <location>
        <position position="170"/>
    </location>
    <ligand>
        <name>substrate</name>
    </ligand>
</feature>
<feature type="binding site" description="via carbamate group" evidence="1">
    <location>
        <position position="194"/>
    </location>
    <ligand>
        <name>Mg(2+)</name>
        <dbReference type="ChEBI" id="CHEBI:18420"/>
    </ligand>
</feature>
<feature type="binding site" evidence="1">
    <location>
        <position position="196"/>
    </location>
    <ligand>
        <name>Mg(2+)</name>
        <dbReference type="ChEBI" id="CHEBI:18420"/>
    </ligand>
</feature>
<feature type="binding site" evidence="1">
    <location>
        <position position="197"/>
    </location>
    <ligand>
        <name>Mg(2+)</name>
        <dbReference type="ChEBI" id="CHEBI:18420"/>
    </ligand>
</feature>
<feature type="binding site" evidence="1">
    <location>
        <position position="288"/>
    </location>
    <ligand>
        <name>substrate</name>
    </ligand>
</feature>
<feature type="binding site" evidence="1">
    <location>
        <position position="320"/>
    </location>
    <ligand>
        <name>substrate</name>
    </ligand>
</feature>
<feature type="binding site" evidence="1">
    <location>
        <position position="372"/>
    </location>
    <ligand>
        <name>substrate</name>
    </ligand>
</feature>
<feature type="site" description="Transition state stabilizer" evidence="1">
    <location>
        <position position="327"/>
    </location>
</feature>
<feature type="modified residue" description="N6-carboxylysine" evidence="1">
    <location>
        <position position="194"/>
    </location>
</feature>
<sequence length="473" mass="52613">MAVKTYQAGVTEYRQSYWQPDYAPLDTDLLACFKITPQPGVDREEAAVAVAAESSCGTWTTVWTDLLTDLDYYKGRAYRLEDVPGDDTCFYAFIAYPIDLFEEGSVVNVFTSLVGNVFGFKAVRALRLEDLRFPIAYVKTCGGPPNGIQVERDKLNKYGRLLLGCTIKPKLGLSAKNYGRACYEALRGGLDFTKDDENINSQPFMRWRDRFDFVMEAVQKAEQETGERKGHYLNVTAPTPEEMYKRAEHAKEIGAPIIMHDYLAGGLCANAGLANWCRNNGMLPHVHRAMHAVLDRNPHHGIHFRVLTKILRLSGGDHLHTGTVVGKLEGDRASTLGWIDLLRESFVPEDRSRGIFFDQDWGSMPGAFAVASGGIHVWHMPALVAIFGDDSVLQFGGGTLGHPWGNAAGAHANRVALEACVQARNEGRQIEKEGREILTAAAQHSPELKIAMETWKEIKFEFETMDKLAIANK</sequence>
<organism>
    <name type="scientific">Nitrosospira sp. (strain TCH716)</name>
    <dbReference type="NCBI Taxonomy" id="155922"/>
    <lineage>
        <taxon>Bacteria</taxon>
        <taxon>Pseudomonadati</taxon>
        <taxon>Pseudomonadota</taxon>
        <taxon>Betaproteobacteria</taxon>
        <taxon>Nitrosomonadales</taxon>
        <taxon>Nitrosomonadaceae</taxon>
        <taxon>Nitrosospira</taxon>
    </lineage>
</organism>
<gene>
    <name evidence="1" type="primary">cbbL</name>
</gene>
<comment type="function">
    <text evidence="1">RuBisCO catalyzes two reactions: the carboxylation of D-ribulose 1,5-bisphosphate, the primary event in carbon dioxide fixation, as well as the oxidative fragmentation of the pentose substrate. Both reactions occur simultaneously and in competition at the same active site.</text>
</comment>
<comment type="catalytic activity">
    <reaction evidence="1">
        <text>2 (2R)-3-phosphoglycerate + 2 H(+) = D-ribulose 1,5-bisphosphate + CO2 + H2O</text>
        <dbReference type="Rhea" id="RHEA:23124"/>
        <dbReference type="ChEBI" id="CHEBI:15377"/>
        <dbReference type="ChEBI" id="CHEBI:15378"/>
        <dbReference type="ChEBI" id="CHEBI:16526"/>
        <dbReference type="ChEBI" id="CHEBI:57870"/>
        <dbReference type="ChEBI" id="CHEBI:58272"/>
        <dbReference type="EC" id="4.1.1.39"/>
    </reaction>
</comment>
<comment type="catalytic activity">
    <reaction evidence="1">
        <text>D-ribulose 1,5-bisphosphate + O2 = 2-phosphoglycolate + (2R)-3-phosphoglycerate + 2 H(+)</text>
        <dbReference type="Rhea" id="RHEA:36631"/>
        <dbReference type="ChEBI" id="CHEBI:15378"/>
        <dbReference type="ChEBI" id="CHEBI:15379"/>
        <dbReference type="ChEBI" id="CHEBI:57870"/>
        <dbReference type="ChEBI" id="CHEBI:58033"/>
        <dbReference type="ChEBI" id="CHEBI:58272"/>
    </reaction>
</comment>
<comment type="cofactor">
    <cofactor evidence="1">
        <name>Mg(2+)</name>
        <dbReference type="ChEBI" id="CHEBI:18420"/>
    </cofactor>
    <text evidence="1">Binds 1 Mg(2+) ion per subunit.</text>
</comment>
<comment type="subunit">
    <text evidence="1">Heterohexadecamer of 8 large chains and 8 small chains.</text>
</comment>
<comment type="miscellaneous">
    <text evidence="1">The basic functional RuBisCO is composed of a large chain homodimer in a 'head-to-tail' conformation. In form I RuBisCO this homodimer is arranged in a barrel-like tetramer with the small subunits forming a tetrameric 'cap' on each end of the 'barrel'.</text>
</comment>
<comment type="similarity">
    <text evidence="1">Belongs to the RuBisCO large chain family. Type I subfamily.</text>
</comment>
<accession>Q8VQ84</accession>
<reference key="1">
    <citation type="journal article" date="2001" name="J. Biosci. Bioeng.">
        <title>Characteristics of an ammonia-oxidizing bacterium with a plasmid isolated from alkaline soils and its phylogenetic relationship.</title>
        <authorList>
            <person name="Takahashi R."/>
            <person name="Ohishi M."/>
            <person name="Ohshima M."/>
            <person name="Saitoh M."/>
            <person name="Omata K."/>
            <person name="Tokuyama T."/>
        </authorList>
    </citation>
    <scope>NUCLEOTIDE SEQUENCE [GENOMIC DNA]</scope>
</reference>